<evidence type="ECO:0000250" key="1"/>
<evidence type="ECO:0000250" key="2">
    <source>
        <dbReference type="UniProtKB" id="P28817"/>
    </source>
</evidence>
<evidence type="ECO:0000255" key="3"/>
<evidence type="ECO:0000305" key="4"/>
<evidence type="ECO:0000312" key="5">
    <source>
        <dbReference type="EMBL" id="CAA21167.1"/>
    </source>
</evidence>
<feature type="chain" id="PRO_0000311721" description="Small ribosomal subunit protein mS47">
    <location>
        <begin position="1"/>
        <end position="429"/>
    </location>
</feature>
<feature type="binding site" evidence="1">
    <location>
        <position position="141"/>
    </location>
    <ligand>
        <name>substrate</name>
    </ligand>
</feature>
<feature type="binding site" evidence="1">
    <location>
        <position position="166"/>
    </location>
    <ligand>
        <name>substrate</name>
    </ligand>
</feature>
<feature type="binding site" evidence="1">
    <location>
        <position position="189"/>
    </location>
    <ligand>
        <name>substrate</name>
    </ligand>
</feature>
<feature type="binding site" evidence="1">
    <location>
        <position position="197"/>
    </location>
    <ligand>
        <name>substrate</name>
    </ligand>
</feature>
<keyword id="KW-0101">Branched-chain amino acid catabolism</keyword>
<keyword id="KW-0378">Hydrolase</keyword>
<keyword id="KW-0496">Mitochondrion</keyword>
<keyword id="KW-1185">Reference proteome</keyword>
<keyword id="KW-0687">Ribonucleoprotein</keyword>
<keyword id="KW-0689">Ribosomal protein</keyword>
<protein>
    <recommendedName>
        <fullName evidence="4">Small ribosomal subunit protein mS47</fullName>
    </recommendedName>
    <alternativeName>
        <fullName>3-hydroxyisobutyryl-CoA hydrolase, mitochondrial</fullName>
        <ecNumber>3.1.2.4</ecNumber>
    </alternativeName>
    <alternativeName>
        <fullName>3-hydroxyisobutyryl-coenzyme A hydrolase</fullName>
        <shortName>HIB-CoA hydrolase</shortName>
        <shortName>HIBYL-CoA-H</shortName>
    </alternativeName>
</protein>
<dbReference type="EC" id="3.1.2.4"/>
<dbReference type="EMBL" id="CU329671">
    <property type="protein sequence ID" value="CAA21167.1"/>
    <property type="molecule type" value="Genomic_DNA"/>
</dbReference>
<dbReference type="PIR" id="T40112">
    <property type="entry name" value="T40112"/>
</dbReference>
<dbReference type="RefSeq" id="NP_596228.1">
    <property type="nucleotide sequence ID" value="NM_001022148.2"/>
</dbReference>
<dbReference type="SMR" id="O74802"/>
<dbReference type="BioGRID" id="276922">
    <property type="interactions" value="42"/>
</dbReference>
<dbReference type="ComplexPortal" id="CPX-10315">
    <property type="entry name" value="37S mitochondrial small ribosomal subunit"/>
</dbReference>
<dbReference type="FunCoup" id="O74802">
    <property type="interactions" value="418"/>
</dbReference>
<dbReference type="IntAct" id="O74802">
    <property type="interactions" value="4"/>
</dbReference>
<dbReference type="STRING" id="284812.O74802"/>
<dbReference type="iPTMnet" id="O74802"/>
<dbReference type="PaxDb" id="4896-SPBC2D10.09.1"/>
<dbReference type="EnsemblFungi" id="SPBC2D10.09.1">
    <property type="protein sequence ID" value="SPBC2D10.09.1:pep"/>
    <property type="gene ID" value="SPBC2D10.09"/>
</dbReference>
<dbReference type="GeneID" id="2540394"/>
<dbReference type="KEGG" id="spo:2540394"/>
<dbReference type="PomBase" id="SPBC2D10.09">
    <property type="gene designation" value="snr1"/>
</dbReference>
<dbReference type="VEuPathDB" id="FungiDB:SPBC2D10.09"/>
<dbReference type="eggNOG" id="KOG1684">
    <property type="taxonomic scope" value="Eukaryota"/>
</dbReference>
<dbReference type="HOGENOM" id="CLU_009834_22_1_1"/>
<dbReference type="InParanoid" id="O74802"/>
<dbReference type="OMA" id="LVWEQIR"/>
<dbReference type="PhylomeDB" id="O74802"/>
<dbReference type="Reactome" id="R-SPO-70895">
    <property type="pathway name" value="Branched-chain amino acid catabolism"/>
</dbReference>
<dbReference type="UniPathway" id="UPA00362"/>
<dbReference type="PRO" id="PR:O74802"/>
<dbReference type="Proteomes" id="UP000002485">
    <property type="component" value="Chromosome II"/>
</dbReference>
<dbReference type="GO" id="GO:0005763">
    <property type="term" value="C:mitochondrial small ribosomal subunit"/>
    <property type="evidence" value="ECO:0000266"/>
    <property type="project" value="PomBase"/>
</dbReference>
<dbReference type="GO" id="GO:0005739">
    <property type="term" value="C:mitochondrion"/>
    <property type="evidence" value="ECO:0000318"/>
    <property type="project" value="GO_Central"/>
</dbReference>
<dbReference type="GO" id="GO:0003860">
    <property type="term" value="F:3-hydroxyisobutyryl-CoA hydrolase activity"/>
    <property type="evidence" value="ECO:0000318"/>
    <property type="project" value="GO_Central"/>
</dbReference>
<dbReference type="GO" id="GO:0032543">
    <property type="term" value="P:mitochondrial translation"/>
    <property type="evidence" value="ECO:0000266"/>
    <property type="project" value="PomBase"/>
</dbReference>
<dbReference type="GO" id="GO:0006574">
    <property type="term" value="P:valine catabolic process"/>
    <property type="evidence" value="ECO:0000318"/>
    <property type="project" value="GO_Central"/>
</dbReference>
<dbReference type="CDD" id="cd06558">
    <property type="entry name" value="crotonase-like"/>
    <property type="match status" value="1"/>
</dbReference>
<dbReference type="Gene3D" id="3.90.226.10">
    <property type="entry name" value="2-enoyl-CoA Hydratase, Chain A, domain 1"/>
    <property type="match status" value="1"/>
</dbReference>
<dbReference type="InterPro" id="IPR029045">
    <property type="entry name" value="ClpP/crotonase-like_dom_sf"/>
</dbReference>
<dbReference type="InterPro" id="IPR045004">
    <property type="entry name" value="ECH_dom"/>
</dbReference>
<dbReference type="InterPro" id="IPR032259">
    <property type="entry name" value="HIBYL-CoA-H"/>
</dbReference>
<dbReference type="NCBIfam" id="NF004127">
    <property type="entry name" value="PRK05617.1"/>
    <property type="match status" value="1"/>
</dbReference>
<dbReference type="PANTHER" id="PTHR43176:SF3">
    <property type="entry name" value="3-HYDROXYISOBUTYRYL-COA HYDROLASE, MITOCHONDRIAL"/>
    <property type="match status" value="1"/>
</dbReference>
<dbReference type="PANTHER" id="PTHR43176">
    <property type="entry name" value="3-HYDROXYISOBUTYRYL-COA HYDROLASE-RELATED"/>
    <property type="match status" value="1"/>
</dbReference>
<dbReference type="Pfam" id="PF16113">
    <property type="entry name" value="ECH_2"/>
    <property type="match status" value="1"/>
</dbReference>
<dbReference type="SUPFAM" id="SSF52096">
    <property type="entry name" value="ClpP/crotonase"/>
    <property type="match status" value="1"/>
</dbReference>
<name>HIBCH_SCHPO</name>
<reference evidence="5" key="1">
    <citation type="journal article" date="2002" name="Nature">
        <title>The genome sequence of Schizosaccharomyces pombe.</title>
        <authorList>
            <person name="Wood V."/>
            <person name="Gwilliam R."/>
            <person name="Rajandream M.A."/>
            <person name="Lyne M.H."/>
            <person name="Lyne R."/>
            <person name="Stewart A."/>
            <person name="Sgouros J.G."/>
            <person name="Peat N."/>
            <person name="Hayles J."/>
            <person name="Baker S.G."/>
            <person name="Basham D."/>
            <person name="Bowman S."/>
            <person name="Brooks K."/>
            <person name="Brown D."/>
            <person name="Brown S."/>
            <person name="Chillingworth T."/>
            <person name="Churcher C.M."/>
            <person name="Collins M."/>
            <person name="Connor R."/>
            <person name="Cronin A."/>
            <person name="Davis P."/>
            <person name="Feltwell T."/>
            <person name="Fraser A."/>
            <person name="Gentles S."/>
            <person name="Goble A."/>
            <person name="Hamlin N."/>
            <person name="Harris D.E."/>
            <person name="Hidalgo J."/>
            <person name="Hodgson G."/>
            <person name="Holroyd S."/>
            <person name="Hornsby T."/>
            <person name="Howarth S."/>
            <person name="Huckle E.J."/>
            <person name="Hunt S."/>
            <person name="Jagels K."/>
            <person name="James K.D."/>
            <person name="Jones L."/>
            <person name="Jones M."/>
            <person name="Leather S."/>
            <person name="McDonald S."/>
            <person name="McLean J."/>
            <person name="Mooney P."/>
            <person name="Moule S."/>
            <person name="Mungall K.L."/>
            <person name="Murphy L.D."/>
            <person name="Niblett D."/>
            <person name="Odell C."/>
            <person name="Oliver K."/>
            <person name="O'Neil S."/>
            <person name="Pearson D."/>
            <person name="Quail M.A."/>
            <person name="Rabbinowitsch E."/>
            <person name="Rutherford K.M."/>
            <person name="Rutter S."/>
            <person name="Saunders D."/>
            <person name="Seeger K."/>
            <person name="Sharp S."/>
            <person name="Skelton J."/>
            <person name="Simmonds M.N."/>
            <person name="Squares R."/>
            <person name="Squares S."/>
            <person name="Stevens K."/>
            <person name="Taylor K."/>
            <person name="Taylor R.G."/>
            <person name="Tivey A."/>
            <person name="Walsh S.V."/>
            <person name="Warren T."/>
            <person name="Whitehead S."/>
            <person name="Woodward J.R."/>
            <person name="Volckaert G."/>
            <person name="Aert R."/>
            <person name="Robben J."/>
            <person name="Grymonprez B."/>
            <person name="Weltjens I."/>
            <person name="Vanstreels E."/>
            <person name="Rieger M."/>
            <person name="Schaefer M."/>
            <person name="Mueller-Auer S."/>
            <person name="Gabel C."/>
            <person name="Fuchs M."/>
            <person name="Duesterhoeft A."/>
            <person name="Fritzc C."/>
            <person name="Holzer E."/>
            <person name="Moestl D."/>
            <person name="Hilbert H."/>
            <person name="Borzym K."/>
            <person name="Langer I."/>
            <person name="Beck A."/>
            <person name="Lehrach H."/>
            <person name="Reinhardt R."/>
            <person name="Pohl T.M."/>
            <person name="Eger P."/>
            <person name="Zimmermann W."/>
            <person name="Wedler H."/>
            <person name="Wambutt R."/>
            <person name="Purnelle B."/>
            <person name="Goffeau A."/>
            <person name="Cadieu E."/>
            <person name="Dreano S."/>
            <person name="Gloux S."/>
            <person name="Lelaure V."/>
            <person name="Mottier S."/>
            <person name="Galibert F."/>
            <person name="Aves S.J."/>
            <person name="Xiang Z."/>
            <person name="Hunt C."/>
            <person name="Moore K."/>
            <person name="Hurst S.M."/>
            <person name="Lucas M."/>
            <person name="Rochet M."/>
            <person name="Gaillardin C."/>
            <person name="Tallada V.A."/>
            <person name="Garzon A."/>
            <person name="Thode G."/>
            <person name="Daga R.R."/>
            <person name="Cruzado L."/>
            <person name="Jimenez J."/>
            <person name="Sanchez M."/>
            <person name="del Rey F."/>
            <person name="Benito J."/>
            <person name="Dominguez A."/>
            <person name="Revuelta J.L."/>
            <person name="Moreno S."/>
            <person name="Armstrong J."/>
            <person name="Forsburg S.L."/>
            <person name="Cerutti L."/>
            <person name="Lowe T."/>
            <person name="McCombie W.R."/>
            <person name="Paulsen I."/>
            <person name="Potashkin J."/>
            <person name="Shpakovski G.V."/>
            <person name="Ussery D."/>
            <person name="Barrell B.G."/>
            <person name="Nurse P."/>
        </authorList>
    </citation>
    <scope>NUCLEOTIDE SEQUENCE [LARGE SCALE GENOMIC DNA]</scope>
    <source>
        <strain>972 / ATCC 24843</strain>
    </source>
</reference>
<accession>O74802</accession>
<proteinExistence type="evidence at protein level"/>
<organism>
    <name type="scientific">Schizosaccharomyces pombe (strain 972 / ATCC 24843)</name>
    <name type="common">Fission yeast</name>
    <dbReference type="NCBI Taxonomy" id="284812"/>
    <lineage>
        <taxon>Eukaryota</taxon>
        <taxon>Fungi</taxon>
        <taxon>Dikarya</taxon>
        <taxon>Ascomycota</taxon>
        <taxon>Taphrinomycotina</taxon>
        <taxon>Schizosaccharomycetes</taxon>
        <taxon>Schizosaccharomycetales</taxon>
        <taxon>Schizosaccharomycetaceae</taxon>
        <taxon>Schizosaccharomyces</taxon>
    </lineage>
</organism>
<comment type="function">
    <text evidence="2">Component of the mitochondrial ribosome (mitoribosome), a dedicated translation machinery responsible for the synthesis of mitochondrial genome-encoded proteins, including at least some of the essential transmembrane subunits of the mitochondrial respiratory chain. The mitoribosomes are attached to the mitochondrial inner membrane and translation products are cotranslationally integrated into the membrane. mS47/snr1 has enzymatic activity in vitro, and is able to catalyze the specific hydrolysis of 3-hydroxyisobutyryl-CoA (HIBYL-CoA). However, because the turnover rate of mS47/snr1 is only a fraction of that of the homologous mammalian enzyme, the physiological function of this activity remains unclear. Has an indirect role in endocytic membrane trafficking.</text>
</comment>
<comment type="catalytic activity">
    <reaction evidence="2">
        <text>3-hydroxy-2-methylpropanoyl-CoA + H2O = 3-hydroxy-2-methylpropanoate + CoA + H(+)</text>
        <dbReference type="Rhea" id="RHEA:20888"/>
        <dbReference type="ChEBI" id="CHEBI:11805"/>
        <dbReference type="ChEBI" id="CHEBI:15377"/>
        <dbReference type="ChEBI" id="CHEBI:15378"/>
        <dbReference type="ChEBI" id="CHEBI:57287"/>
        <dbReference type="ChEBI" id="CHEBI:57340"/>
        <dbReference type="EC" id="3.1.2.4"/>
    </reaction>
</comment>
<comment type="pathway">
    <text evidence="2">Amino-acid degradation; L-valine degradation.</text>
</comment>
<comment type="subunit">
    <text evidence="2">Component of the mitochondrial small ribosomal subunit (mt-SSU). Mature yeast 74S mitochondrial ribosomes consist of a small (37S) and a large (54S) subunit. The 37S small subunit contains a 15S ribosomal RNA (15S mt-rRNA) and at least 32 different proteins. The 54S large subunit contains a 21S rRNA (21S mt-rRNA) and at least 45 different proteins. mS47/snr1 forms a protuberance of the yeast mitoribosome and retains a solvent-exposed cavity likely capable of accommodating a substrate, in accordance with it being an active enzyme as well as an integral constituent of the mitoribosome.</text>
</comment>
<comment type="interaction">
    <interactant intactId="EBI-16823313">
        <id>O74802</id>
    </interactant>
    <interactant intactId="EBI-3648525">
        <id>Q09892</id>
        <label>sty1</label>
    </interactant>
    <organismsDiffer>false</organismsDiffer>
    <experiments>3</experiments>
</comment>
<comment type="subcellular location">
    <subcellularLocation>
        <location evidence="2">Mitochondrion</location>
    </subcellularLocation>
</comment>
<comment type="similarity">
    <text evidence="3">Belongs to the enoyl-CoA hydratase/isomerase family. Mitochondrion-specific ribosomal protein mS47 subfamily.</text>
</comment>
<sequence>MGLKLNISNDLKKSGFMLRQSLLKTSVSNFLSLNASSTMSRAFIRNPKFYSTSSNDTVLYESKNGARIFTLNRPKVLNAINVDMIDSILPKLVSLEESNLAKVIILKGNGRSFSSGGDIKAAALSIQDGKLPEVRHAFAQEYRLSHTLATYQKPVVALMNGITMGGGSGLAMHVPFRIACEDTMFAMPETGIGYFTDVAASFFFSRLPGYFGTYLGLTSQIVKGYDCLRTGIATHFVPKHMFPHLEDRLAELNTSDISKINNTILEFAEFASSSPPTFTPDVMDVINKCFCKNDTVDIIRALKEYASNTSALAEFAKSTVKTLYSKSPTSIAVTNRLIKSAAKWSISEAFYYDHIVSYYMLKQPDFVEGVNAQLITKTKNPKWSKSHEYHFKDLENYFKLPSEYNNGISFAAKGRRKTPLWNYKTYPYL</sequence>
<gene>
    <name type="primary">snr1</name>
    <name type="synonym">ehd3</name>
    <name type="ORF">SPBC2D10.09</name>
</gene>